<gene>
    <name evidence="1" type="primary">fosB1</name>
    <name type="ordered locus">BAMEG_2548</name>
</gene>
<dbReference type="EC" id="2.5.1.-" evidence="1"/>
<dbReference type="EMBL" id="CP001215">
    <property type="protein sequence ID" value="ACP16954.1"/>
    <property type="molecule type" value="Genomic_DNA"/>
</dbReference>
<dbReference type="SMR" id="C3L5E9"/>
<dbReference type="KEGG" id="bah:BAMEG_2548"/>
<dbReference type="HOGENOM" id="CLU_121356_0_0_9"/>
<dbReference type="GO" id="GO:0005737">
    <property type="term" value="C:cytoplasm"/>
    <property type="evidence" value="ECO:0007669"/>
    <property type="project" value="UniProtKB-SubCell"/>
</dbReference>
<dbReference type="GO" id="GO:0000287">
    <property type="term" value="F:magnesium ion binding"/>
    <property type="evidence" value="ECO:0007669"/>
    <property type="project" value="UniProtKB-UniRule"/>
</dbReference>
<dbReference type="GO" id="GO:0016765">
    <property type="term" value="F:transferase activity, transferring alkyl or aryl (other than methyl) groups"/>
    <property type="evidence" value="ECO:0007669"/>
    <property type="project" value="UniProtKB-UniRule"/>
</dbReference>
<dbReference type="GO" id="GO:0046677">
    <property type="term" value="P:response to antibiotic"/>
    <property type="evidence" value="ECO:0007669"/>
    <property type="project" value="UniProtKB-UniRule"/>
</dbReference>
<dbReference type="FunFam" id="3.10.180.10:FF:000015">
    <property type="entry name" value="Metallothiol transferase FosB"/>
    <property type="match status" value="1"/>
</dbReference>
<dbReference type="Gene3D" id="3.10.180.10">
    <property type="entry name" value="2,3-Dihydroxybiphenyl 1,2-Dioxygenase, domain 1"/>
    <property type="match status" value="1"/>
</dbReference>
<dbReference type="HAMAP" id="MF_01512">
    <property type="entry name" value="FosB"/>
    <property type="match status" value="1"/>
</dbReference>
<dbReference type="InterPro" id="IPR051332">
    <property type="entry name" value="Fosfomycin_Res_Enzymes"/>
</dbReference>
<dbReference type="InterPro" id="IPR029068">
    <property type="entry name" value="Glyas_Bleomycin-R_OHBP_Dase"/>
</dbReference>
<dbReference type="InterPro" id="IPR004360">
    <property type="entry name" value="Glyas_Fos-R_dOase_dom"/>
</dbReference>
<dbReference type="InterPro" id="IPR022858">
    <property type="entry name" value="Metallothiol_Trafse_FosB"/>
</dbReference>
<dbReference type="InterPro" id="IPR037523">
    <property type="entry name" value="VOC"/>
</dbReference>
<dbReference type="NCBIfam" id="NF000493">
    <property type="entry name" value="Fos_BSH"/>
    <property type="match status" value="1"/>
</dbReference>
<dbReference type="NCBIfam" id="NF041541">
    <property type="entry name" value="fosBx1_fam"/>
    <property type="match status" value="1"/>
</dbReference>
<dbReference type="NCBIfam" id="NF003152">
    <property type="entry name" value="PRK04101.1"/>
    <property type="match status" value="1"/>
</dbReference>
<dbReference type="PANTHER" id="PTHR36113:SF6">
    <property type="entry name" value="FOSFOMYCIN RESISTANCE PROTEIN FOSX"/>
    <property type="match status" value="1"/>
</dbReference>
<dbReference type="PANTHER" id="PTHR36113">
    <property type="entry name" value="LYASE, PUTATIVE-RELATED-RELATED"/>
    <property type="match status" value="1"/>
</dbReference>
<dbReference type="Pfam" id="PF00903">
    <property type="entry name" value="Glyoxalase"/>
    <property type="match status" value="1"/>
</dbReference>
<dbReference type="SUPFAM" id="SSF54593">
    <property type="entry name" value="Glyoxalase/Bleomycin resistance protein/Dihydroxybiphenyl dioxygenase"/>
    <property type="match status" value="1"/>
</dbReference>
<dbReference type="PROSITE" id="PS51819">
    <property type="entry name" value="VOC"/>
    <property type="match status" value="1"/>
</dbReference>
<keyword id="KW-0046">Antibiotic resistance</keyword>
<keyword id="KW-0963">Cytoplasm</keyword>
<keyword id="KW-0460">Magnesium</keyword>
<keyword id="KW-0479">Metal-binding</keyword>
<keyword id="KW-0808">Transferase</keyword>
<accession>C3L5E9</accession>
<comment type="function">
    <text evidence="1">Metallothiol transferase which confers resistance to fosfomycin by catalyzing the addition of a thiol cofactor to fosfomycin. L-cysteine is probably the physiological thiol donor.</text>
</comment>
<comment type="cofactor">
    <cofactor evidence="1">
        <name>Mg(2+)</name>
        <dbReference type="ChEBI" id="CHEBI:18420"/>
    </cofactor>
</comment>
<comment type="subunit">
    <text evidence="1">Homodimer.</text>
</comment>
<comment type="subcellular location">
    <subcellularLocation>
        <location evidence="1">Cytoplasm</location>
    </subcellularLocation>
</comment>
<comment type="similarity">
    <text evidence="1">Belongs to the fosfomycin resistance protein family. FosB subfamily.</text>
</comment>
<evidence type="ECO:0000255" key="1">
    <source>
        <dbReference type="HAMAP-Rule" id="MF_01512"/>
    </source>
</evidence>
<evidence type="ECO:0000255" key="2">
    <source>
        <dbReference type="PROSITE-ProRule" id="PRU01163"/>
    </source>
</evidence>
<sequence length="138" mass="16538">MLKGINHLCFSVSNLEDSITFYEKVLEGELLVRGRKLAYFNICGVWIALNEEIHIPRKEIHQSYTHIAFSVEQKDFERLLQRLEENDVHILQGRERDVRDCESIYFVDPDGHKFEFHSGTLQERLNYYREDKPHMTFY</sequence>
<organism>
    <name type="scientific">Bacillus anthracis (strain CDC 684 / NRRL 3495)</name>
    <dbReference type="NCBI Taxonomy" id="568206"/>
    <lineage>
        <taxon>Bacteria</taxon>
        <taxon>Bacillati</taxon>
        <taxon>Bacillota</taxon>
        <taxon>Bacilli</taxon>
        <taxon>Bacillales</taxon>
        <taxon>Bacillaceae</taxon>
        <taxon>Bacillus</taxon>
        <taxon>Bacillus cereus group</taxon>
    </lineage>
</organism>
<reference key="1">
    <citation type="submission" date="2008-10" db="EMBL/GenBank/DDBJ databases">
        <title>Genome sequence of Bacillus anthracis str. CDC 684.</title>
        <authorList>
            <person name="Dodson R.J."/>
            <person name="Munk A.C."/>
            <person name="Brettin T."/>
            <person name="Bruce D."/>
            <person name="Detter C."/>
            <person name="Tapia R."/>
            <person name="Han C."/>
            <person name="Sutton G."/>
            <person name="Sims D."/>
        </authorList>
    </citation>
    <scope>NUCLEOTIDE SEQUENCE [LARGE SCALE GENOMIC DNA]</scope>
    <source>
        <strain>CDC 684 / NRRL 3495</strain>
    </source>
</reference>
<name>FOSB1_BACAC</name>
<feature type="chain" id="PRO_0000383362" description="Metallothiol transferase FosB 1">
    <location>
        <begin position="1"/>
        <end position="138"/>
    </location>
</feature>
<feature type="domain" description="VOC" evidence="2">
    <location>
        <begin position="4"/>
        <end position="119"/>
    </location>
</feature>
<feature type="active site" description="Proton donor/acceptor" evidence="2">
    <location>
        <position position="115"/>
    </location>
</feature>
<feature type="binding site" evidence="1">
    <location>
        <position position="7"/>
    </location>
    <ligand>
        <name>Mg(2+)</name>
        <dbReference type="ChEBI" id="CHEBI:18420"/>
    </ligand>
</feature>
<feature type="binding site" evidence="1">
    <location>
        <position position="66"/>
    </location>
    <ligand>
        <name>Mg(2+)</name>
        <dbReference type="ChEBI" id="CHEBI:18420"/>
    </ligand>
</feature>
<feature type="binding site" evidence="1">
    <location>
        <position position="115"/>
    </location>
    <ligand>
        <name>Mg(2+)</name>
        <dbReference type="ChEBI" id="CHEBI:18420"/>
    </ligand>
</feature>
<proteinExistence type="inferred from homology"/>
<protein>
    <recommendedName>
        <fullName evidence="1">Metallothiol transferase FosB 1</fullName>
        <ecNumber evidence="1">2.5.1.-</ecNumber>
    </recommendedName>
    <alternativeName>
        <fullName evidence="1">Fosfomycin resistance protein 1</fullName>
    </alternativeName>
</protein>